<dbReference type="EC" id="2.3.1.12"/>
<dbReference type="EMBL" id="X12455">
    <property type="protein sequence ID" value="CAA30987.1"/>
    <property type="status" value="ALT_INIT"/>
    <property type="molecule type" value="Genomic_DNA"/>
</dbReference>
<dbReference type="PIR" id="S01017">
    <property type="entry name" value="XXAV"/>
</dbReference>
<dbReference type="PDB" id="1DPB">
    <property type="method" value="X-ray"/>
    <property type="resolution" value="2.50 A"/>
    <property type="chains" value="A=396-638"/>
</dbReference>
<dbReference type="PDB" id="1DPC">
    <property type="method" value="X-ray"/>
    <property type="resolution" value="2.60 A"/>
    <property type="chains" value="A=396-638"/>
</dbReference>
<dbReference type="PDB" id="1DPD">
    <property type="method" value="X-ray"/>
    <property type="resolution" value="2.70 A"/>
    <property type="chains" value="A=396-638"/>
</dbReference>
<dbReference type="PDB" id="1EAA">
    <property type="method" value="X-ray"/>
    <property type="resolution" value="2.60 A"/>
    <property type="chains" value="A=396-638"/>
</dbReference>
<dbReference type="PDB" id="1EAB">
    <property type="method" value="X-ray"/>
    <property type="resolution" value="2.60 A"/>
    <property type="chains" value="A=396-638"/>
</dbReference>
<dbReference type="PDB" id="1EAC">
    <property type="method" value="X-ray"/>
    <property type="resolution" value="2.60 A"/>
    <property type="chains" value="A=396-638"/>
</dbReference>
<dbReference type="PDB" id="1EAD">
    <property type="method" value="X-ray"/>
    <property type="resolution" value="2.60 A"/>
    <property type="chains" value="A=396-638"/>
</dbReference>
<dbReference type="PDB" id="1EAE">
    <property type="method" value="X-ray"/>
    <property type="resolution" value="2.60 A"/>
    <property type="chains" value="A=396-638"/>
</dbReference>
<dbReference type="PDB" id="1EAF">
    <property type="method" value="X-ray"/>
    <property type="resolution" value="2.60 A"/>
    <property type="chains" value="A=396-638"/>
</dbReference>
<dbReference type="PDB" id="1IYU">
    <property type="method" value="NMR"/>
    <property type="chains" value="A=2-79"/>
</dbReference>
<dbReference type="PDB" id="1IYV">
    <property type="method" value="NMR"/>
    <property type="chains" value="A=2-79"/>
</dbReference>
<dbReference type="PDBsum" id="1DPB"/>
<dbReference type="PDBsum" id="1DPC"/>
<dbReference type="PDBsum" id="1DPD"/>
<dbReference type="PDBsum" id="1EAA"/>
<dbReference type="PDBsum" id="1EAB"/>
<dbReference type="PDBsum" id="1EAC"/>
<dbReference type="PDBsum" id="1EAD"/>
<dbReference type="PDBsum" id="1EAE"/>
<dbReference type="PDBsum" id="1EAF"/>
<dbReference type="PDBsum" id="1IYU"/>
<dbReference type="PDBsum" id="1IYV"/>
<dbReference type="SMR" id="P10802"/>
<dbReference type="DrugBank" id="DB08120">
    <property type="generic name" value="6,8-DIMERCAPTO-OCTANOIC ACID AMIDE"/>
</dbReference>
<dbReference type="DrugBank" id="DB01992">
    <property type="generic name" value="Coenzyme A"/>
</dbReference>
<dbReference type="DrugBank" id="DB01846">
    <property type="generic name" value="Oxidized coenzyme A"/>
</dbReference>
<dbReference type="EvolutionaryTrace" id="P10802"/>
<dbReference type="GO" id="GO:0005737">
    <property type="term" value="C:cytoplasm"/>
    <property type="evidence" value="ECO:0007669"/>
    <property type="project" value="TreeGrafter"/>
</dbReference>
<dbReference type="GO" id="GO:0045254">
    <property type="term" value="C:pyruvate dehydrogenase complex"/>
    <property type="evidence" value="ECO:0007669"/>
    <property type="project" value="InterPro"/>
</dbReference>
<dbReference type="GO" id="GO:0004742">
    <property type="term" value="F:dihydrolipoyllysine-residue acetyltransferase activity"/>
    <property type="evidence" value="ECO:0007669"/>
    <property type="project" value="UniProtKB-EC"/>
</dbReference>
<dbReference type="GO" id="GO:0031405">
    <property type="term" value="F:lipoic acid binding"/>
    <property type="evidence" value="ECO:0007669"/>
    <property type="project" value="TreeGrafter"/>
</dbReference>
<dbReference type="GO" id="GO:0006086">
    <property type="term" value="P:pyruvate decarboxylation to acetyl-CoA"/>
    <property type="evidence" value="ECO:0007669"/>
    <property type="project" value="TreeGrafter"/>
</dbReference>
<dbReference type="CDD" id="cd06849">
    <property type="entry name" value="lipoyl_domain"/>
    <property type="match status" value="3"/>
</dbReference>
<dbReference type="FunFam" id="3.30.559.10:FF:000004">
    <property type="entry name" value="Acetyltransferase component of pyruvate dehydrogenase complex"/>
    <property type="match status" value="1"/>
</dbReference>
<dbReference type="Gene3D" id="2.40.50.100">
    <property type="match status" value="3"/>
</dbReference>
<dbReference type="Gene3D" id="3.30.559.10">
    <property type="entry name" value="Chloramphenicol acetyltransferase-like domain"/>
    <property type="match status" value="1"/>
</dbReference>
<dbReference type="Gene3D" id="4.10.320.10">
    <property type="entry name" value="E3-binding domain"/>
    <property type="match status" value="1"/>
</dbReference>
<dbReference type="InterPro" id="IPR003016">
    <property type="entry name" value="2-oxoA_DH_lipoyl-BS"/>
</dbReference>
<dbReference type="InterPro" id="IPR001078">
    <property type="entry name" value="2-oxoacid_DH_actylTfrase"/>
</dbReference>
<dbReference type="InterPro" id="IPR050743">
    <property type="entry name" value="2-oxoacid_DH_E2_comp"/>
</dbReference>
<dbReference type="InterPro" id="IPR006256">
    <property type="entry name" value="AcTrfase_Pyrv_DH_cplx"/>
</dbReference>
<dbReference type="InterPro" id="IPR000089">
    <property type="entry name" value="Biotin_lipoyl"/>
</dbReference>
<dbReference type="InterPro" id="IPR023213">
    <property type="entry name" value="CAT-like_dom_sf"/>
</dbReference>
<dbReference type="InterPro" id="IPR036625">
    <property type="entry name" value="E3-bd_dom_sf"/>
</dbReference>
<dbReference type="InterPro" id="IPR004167">
    <property type="entry name" value="PSBD"/>
</dbReference>
<dbReference type="InterPro" id="IPR011053">
    <property type="entry name" value="Single_hybrid_motif"/>
</dbReference>
<dbReference type="NCBIfam" id="TIGR01348">
    <property type="entry name" value="PDHac_trf_long"/>
    <property type="match status" value="1"/>
</dbReference>
<dbReference type="NCBIfam" id="NF008814">
    <property type="entry name" value="PRK11854.1"/>
    <property type="match status" value="1"/>
</dbReference>
<dbReference type="PANTHER" id="PTHR43178">
    <property type="entry name" value="DIHYDROLIPOAMIDE ACETYLTRANSFERASE COMPONENT OF PYRUVATE DEHYDROGENASE COMPLEX"/>
    <property type="match status" value="1"/>
</dbReference>
<dbReference type="PANTHER" id="PTHR43178:SF2">
    <property type="entry name" value="DIHYDROLIPOYLLYSINE-RESIDUE ACETYLTRANSFERASE COMPONENT OF PYRUVATE DEHYDROGENASE COMPLEX"/>
    <property type="match status" value="1"/>
</dbReference>
<dbReference type="Pfam" id="PF00198">
    <property type="entry name" value="2-oxoacid_dh"/>
    <property type="match status" value="1"/>
</dbReference>
<dbReference type="Pfam" id="PF00364">
    <property type="entry name" value="Biotin_lipoyl"/>
    <property type="match status" value="3"/>
</dbReference>
<dbReference type="Pfam" id="PF02817">
    <property type="entry name" value="E3_binding"/>
    <property type="match status" value="1"/>
</dbReference>
<dbReference type="SUPFAM" id="SSF52777">
    <property type="entry name" value="CoA-dependent acyltransferases"/>
    <property type="match status" value="1"/>
</dbReference>
<dbReference type="SUPFAM" id="SSF47005">
    <property type="entry name" value="Peripheral subunit-binding domain of 2-oxo acid dehydrogenase complex"/>
    <property type="match status" value="1"/>
</dbReference>
<dbReference type="SUPFAM" id="SSF51230">
    <property type="entry name" value="Single hybrid motif"/>
    <property type="match status" value="3"/>
</dbReference>
<dbReference type="PROSITE" id="PS50968">
    <property type="entry name" value="BIOTINYL_LIPOYL"/>
    <property type="match status" value="3"/>
</dbReference>
<dbReference type="PROSITE" id="PS00189">
    <property type="entry name" value="LIPOYL"/>
    <property type="match status" value="3"/>
</dbReference>
<dbReference type="PROSITE" id="PS51826">
    <property type="entry name" value="PSBD"/>
    <property type="match status" value="1"/>
</dbReference>
<comment type="function">
    <text>The pyruvate dehydrogenase complex catalyzes the overall conversion of pyruvate to acetyl-CoA and CO(2). It contains multiple copies of three enzymatic components: pyruvate dehydrogenase (E1), dihydrolipoamide acetyltransferase (E2) and lipoamide dehydrogenase (E3).</text>
</comment>
<comment type="catalytic activity">
    <reaction>
        <text>N(6)-[(R)-dihydrolipoyl]-L-lysyl-[protein] + acetyl-CoA = N(6)-[(R)-S(8)-acetyldihydrolipoyl]-L-lysyl-[protein] + CoA</text>
        <dbReference type="Rhea" id="RHEA:17017"/>
        <dbReference type="Rhea" id="RHEA-COMP:10475"/>
        <dbReference type="Rhea" id="RHEA-COMP:10478"/>
        <dbReference type="ChEBI" id="CHEBI:57287"/>
        <dbReference type="ChEBI" id="CHEBI:57288"/>
        <dbReference type="ChEBI" id="CHEBI:83100"/>
        <dbReference type="ChEBI" id="CHEBI:83111"/>
        <dbReference type="EC" id="2.3.1.12"/>
    </reaction>
</comment>
<comment type="cofactor">
    <cofactor evidence="1">
        <name>(R)-lipoate</name>
        <dbReference type="ChEBI" id="CHEBI:83088"/>
    </cofactor>
    <text evidence="1">Binds 3 lipoyl cofactors covalently.</text>
</comment>
<comment type="subunit">
    <text>Forms a 24-polypeptide structural core with octahedral symmetry.</text>
</comment>
<comment type="similarity">
    <text evidence="7">Belongs to the 2-oxoacid dehydrogenase family.</text>
</comment>
<comment type="sequence caution" evidence="7">
    <conflict type="erroneous initiation">
        <sequence resource="EMBL-CDS" id="CAA30987"/>
    </conflict>
</comment>
<keyword id="KW-0002">3D-structure</keyword>
<keyword id="KW-0012">Acyltransferase</keyword>
<keyword id="KW-0903">Direct protein sequencing</keyword>
<keyword id="KW-0450">Lipoyl</keyword>
<keyword id="KW-0677">Repeat</keyword>
<keyword id="KW-0808">Transferase</keyword>
<protein>
    <recommendedName>
        <fullName>Dihydrolipoyllysine-residue acetyltransferase component of pyruvate dehydrogenase complex</fullName>
        <ecNumber>2.3.1.12</ecNumber>
    </recommendedName>
    <alternativeName>
        <fullName>Dihydrolipoamide acetyltransferase component of pyruvate dehydrogenase complex</fullName>
    </alternativeName>
    <alternativeName>
        <fullName>E2</fullName>
    </alternativeName>
</protein>
<name>ODP2_AZOVI</name>
<reference key="1">
    <citation type="journal article" date="1988" name="Eur. J. Biochem.">
        <title>The dihydrolipoyltransacetylase component of the pyruvate dehydrogenase complex from Azotobacter vinelandii. Molecular cloning and sequence analysis.</title>
        <authorList>
            <person name="Hanemaaijer R."/>
            <person name="Janssen A."/>
            <person name="de Kok A."/>
            <person name="Veeger C."/>
        </authorList>
    </citation>
    <scope>NUCLEOTIDE SEQUENCE [GENOMIC DNA]</scope>
    <source>
        <strain>ATCC 478 / DSM 2289 / BCRC 14361 / JCM 21475 / KCTC 12137 / NBRC 102612 / NCIMB 12096 / NRRL B-14641 / VKM B-1617 / NRS 16</strain>
    </source>
</reference>
<reference key="2">
    <citation type="journal article" date="1987" name="Eur. J. Biochem.">
        <title>The domain structure of the dihydrolipoyl transacetylase component of the pyruvate dehydrogenase complex from Azotobacter vinelandii.</title>
        <authorList>
            <person name="Hanemaaijer R."/>
            <person name="de Kok A."/>
            <person name="Jolles J."/>
            <person name="Veeger C."/>
        </authorList>
    </citation>
    <scope>PROTEIN SEQUENCE OF 2-16 AND 381-416</scope>
</reference>
<reference key="3">
    <citation type="journal article" date="1988" name="FEBS Lett.">
        <title>Mobile sequences in the pyruvate dehydrogenase complex, the E2 component, the catalytic domain and the 2-oxoglutarate dehydrogenase complex of Azotobacter vinelandii, as detected by 600 MHz 1H-NMR spectroscopy.</title>
        <authorList>
            <person name="Hanemaaijer R."/>
            <person name="Vervoort J."/>
            <person name="Westphal A.H."/>
            <person name="de Kok A."/>
            <person name="Veeger C."/>
        </authorList>
    </citation>
    <scope>LIPOYL DOMAIN CONFORMATION</scope>
</reference>
<reference key="4">
    <citation type="journal article" date="1992" name="Science">
        <title>Atomic structure of the cubic core of the pyruvate dehydrogenase multienzyme complex.</title>
        <authorList>
            <person name="Mattevi A."/>
            <person name="Obmolova G."/>
            <person name="Schulze E."/>
            <person name="Kalk K.H."/>
            <person name="Westphal A.H."/>
            <person name="de Kok A."/>
            <person name="Hol W.G.J."/>
        </authorList>
    </citation>
    <scope>X-RAY CRYSTALLOGRAPHY (2.6 ANGSTROMS) OF 382-638</scope>
</reference>
<reference key="5">
    <citation type="journal article" date="1994" name="Eur. J. Biochem.">
        <title>Sequential 1H and 15N nuclear magnetic resonance assignments and secondary structure of the N-terminal lipoyl domain of the dihydrolipoyl transacetylase component of the pyruvate dehydrogenase complex from Azotobacter vinelandii.</title>
        <authorList>
            <person name="Berg A."/>
            <person name="de Kok A."/>
            <person name="Vervoort J."/>
        </authorList>
    </citation>
    <scope>STRUCTURE BY NMR OF 1-79</scope>
</reference>
<reference key="6">
    <citation type="journal article" date="1997" name="Eur. J. Biochem.">
        <title>Three-dimensional structure in solution of the N-terminal lipoyl domain of the pyruvate dehydrogenase complex from Azotobacter vinelandii.</title>
        <authorList>
            <person name="Berg A."/>
            <person name="Vervoort J."/>
            <person name="de Kok A."/>
        </authorList>
    </citation>
    <scope>STRUCTURE BY NMR OF 1-79</scope>
</reference>
<evidence type="ECO:0000250" key="1"/>
<evidence type="ECO:0000255" key="2"/>
<evidence type="ECO:0000255" key="3">
    <source>
        <dbReference type="PROSITE-ProRule" id="PRU01066"/>
    </source>
</evidence>
<evidence type="ECO:0000255" key="4">
    <source>
        <dbReference type="PROSITE-ProRule" id="PRU01170"/>
    </source>
</evidence>
<evidence type="ECO:0000256" key="5">
    <source>
        <dbReference type="SAM" id="MobiDB-lite"/>
    </source>
</evidence>
<evidence type="ECO:0000269" key="6">
    <source>
    </source>
</evidence>
<evidence type="ECO:0000305" key="7"/>
<evidence type="ECO:0007829" key="8">
    <source>
        <dbReference type="PDB" id="1DPB"/>
    </source>
</evidence>
<evidence type="ECO:0007829" key="9">
    <source>
        <dbReference type="PDB" id="1EAA"/>
    </source>
</evidence>
<evidence type="ECO:0007829" key="10">
    <source>
        <dbReference type="PDB" id="1IYU"/>
    </source>
</evidence>
<proteinExistence type="evidence at protein level"/>
<sequence length="638" mass="65045">MSEIIRVPDIGGDGEVIELLVKTGDLIEVEQGLVVLESAKASMEVPSPKAGVVKSVSVKLGDKLKEGDAIIELEPAAGAAAAPAEAAAVPAAPTQAVDEAEAPSPGASATPAPAAASQEVRVPDIGSAGKARVIEVLVKAGDQVQAEQSLIVLESDKASMEIPSPASGVVESVAIQLNAEVGTGDLILTLRTTGAQAQPTAPAAAAAASPAPAPLAPAAAGPQEVKVPDIGSAGKARVIEVLVKAGDQVQAEQSLIVLESDKASMEIPSPAAGVVESVAVQLNAEVGTGDQILTLRVAGAAPSGPRARGSPGQAAAAPGAAPAPAPVGAPSRNGAKVHAGPAVRQLAREFGVELAAINSTGPRGRILKEDVQAYVKAMMQKAKEAPAAGAASGAGIPPIPPVDFAKYGEIEEVPMTRLMQIGATNLHRSWLNVPHVTQFESADITELEAFRVAQKAVAEKAGVKLTVLPLLLKACAYLLKELPDFNSSLAPSGQALIRKKYVHIGFAVDTPDGLLVPVIRNVDQKSLLQLAAEAAELAEKARSKKLGADAMQGACFTISSLGHIGGTAFTPIVNAPEVAILGVSKASMQPVWDGKAFQPRLMLPLSLSYDHRVINGAAAARFTKRLGDLLADIRAILL</sequence>
<accession>P10802</accession>
<organism>
    <name type="scientific">Azotobacter vinelandii</name>
    <dbReference type="NCBI Taxonomy" id="354"/>
    <lineage>
        <taxon>Bacteria</taxon>
        <taxon>Pseudomonadati</taxon>
        <taxon>Pseudomonadota</taxon>
        <taxon>Gammaproteobacteria</taxon>
        <taxon>Pseudomonadales</taxon>
        <taxon>Pseudomonadaceae</taxon>
        <taxon>Azotobacter</taxon>
    </lineage>
</organism>
<feature type="initiator methionine" description="Removed" evidence="6">
    <location>
        <position position="1"/>
    </location>
</feature>
<feature type="chain" id="PRO_0000162272" description="Dihydrolipoyllysine-residue acetyltransferase component of pyruvate dehydrogenase complex">
    <location>
        <begin position="2"/>
        <end position="638"/>
    </location>
</feature>
<feature type="domain" description="Lipoyl-binding 1" evidence="3">
    <location>
        <begin position="2"/>
        <end position="74"/>
    </location>
</feature>
<feature type="domain" description="Lipoyl-binding 2" evidence="3">
    <location>
        <begin position="117"/>
        <end position="191"/>
    </location>
</feature>
<feature type="domain" description="Lipoyl-binding 3" evidence="3">
    <location>
        <begin position="222"/>
        <end position="296"/>
    </location>
</feature>
<feature type="domain" description="Peripheral subunit-binding (PSBD)" evidence="4">
    <location>
        <begin position="338"/>
        <end position="375"/>
    </location>
</feature>
<feature type="region of interest" description="Disordered" evidence="5">
    <location>
        <begin position="90"/>
        <end position="119"/>
    </location>
</feature>
<feature type="region of interest" description="Disordered" evidence="5">
    <location>
        <begin position="201"/>
        <end position="220"/>
    </location>
</feature>
<feature type="region of interest" description="Disordered" evidence="5">
    <location>
        <begin position="301"/>
        <end position="336"/>
    </location>
</feature>
<feature type="region of interest" description="Catalytic">
    <location>
        <begin position="382"/>
        <end position="638"/>
    </location>
</feature>
<feature type="compositionally biased region" description="Low complexity" evidence="5">
    <location>
        <begin position="90"/>
        <end position="117"/>
    </location>
</feature>
<feature type="compositionally biased region" description="Low complexity" evidence="5">
    <location>
        <begin position="301"/>
        <end position="320"/>
    </location>
</feature>
<feature type="active site" evidence="2">
    <location>
        <position position="611"/>
    </location>
</feature>
<feature type="modified residue" description="N6-lipoyllysine" evidence="3">
    <location>
        <position position="40"/>
    </location>
</feature>
<feature type="modified residue" description="N6-lipoyllysine" evidence="3">
    <location>
        <position position="157"/>
    </location>
</feature>
<feature type="modified residue" description="N6-lipoyllysine" evidence="3">
    <location>
        <position position="262"/>
    </location>
</feature>
<feature type="strand" evidence="10">
    <location>
        <begin position="3"/>
        <end position="6"/>
    </location>
</feature>
<feature type="strand" evidence="10">
    <location>
        <begin position="11"/>
        <end position="19"/>
    </location>
</feature>
<feature type="strand" evidence="10">
    <location>
        <begin position="29"/>
        <end position="37"/>
    </location>
</feature>
<feature type="strand" evidence="10">
    <location>
        <begin position="42"/>
        <end position="46"/>
    </location>
</feature>
<feature type="strand" evidence="10">
    <location>
        <begin position="48"/>
        <end position="57"/>
    </location>
</feature>
<feature type="strand" evidence="10">
    <location>
        <begin position="63"/>
        <end position="65"/>
    </location>
</feature>
<feature type="strand" evidence="10">
    <location>
        <begin position="68"/>
        <end position="74"/>
    </location>
</feature>
<feature type="helix" evidence="8">
    <location>
        <begin position="404"/>
        <end position="406"/>
    </location>
</feature>
<feature type="helix" evidence="8">
    <location>
        <begin position="417"/>
        <end position="432"/>
    </location>
</feature>
<feature type="strand" evidence="8">
    <location>
        <begin position="435"/>
        <end position="443"/>
    </location>
</feature>
<feature type="helix" evidence="8">
    <location>
        <begin position="445"/>
        <end position="453"/>
    </location>
</feature>
<feature type="helix" evidence="8">
    <location>
        <begin position="455"/>
        <end position="460"/>
    </location>
</feature>
<feature type="helix" evidence="8">
    <location>
        <begin position="468"/>
        <end position="481"/>
    </location>
</feature>
<feature type="helix" evidence="8">
    <location>
        <begin position="483"/>
        <end position="486"/>
    </location>
</feature>
<feature type="strand" evidence="8">
    <location>
        <begin position="487"/>
        <end position="489"/>
    </location>
</feature>
<feature type="strand" evidence="8">
    <location>
        <begin position="496"/>
        <end position="498"/>
    </location>
</feature>
<feature type="strand" evidence="8">
    <location>
        <begin position="504"/>
        <end position="506"/>
    </location>
</feature>
<feature type="strand" evidence="8">
    <location>
        <begin position="508"/>
        <end position="510"/>
    </location>
</feature>
<feature type="strand" evidence="8">
    <location>
        <begin position="513"/>
        <end position="515"/>
    </location>
</feature>
<feature type="strand" evidence="9">
    <location>
        <begin position="518"/>
        <end position="520"/>
    </location>
</feature>
<feature type="helix" evidence="8">
    <location>
        <begin position="522"/>
        <end position="524"/>
    </location>
</feature>
<feature type="helix" evidence="8">
    <location>
        <begin position="527"/>
        <end position="542"/>
    </location>
</feature>
<feature type="helix" evidence="8">
    <location>
        <begin position="548"/>
        <end position="551"/>
    </location>
</feature>
<feature type="strand" evidence="8">
    <location>
        <begin position="555"/>
        <end position="560"/>
    </location>
</feature>
<feature type="turn" evidence="8">
    <location>
        <begin position="562"/>
        <end position="564"/>
    </location>
</feature>
<feature type="strand" evidence="8">
    <location>
        <begin position="577"/>
        <end position="583"/>
    </location>
</feature>
<feature type="strand" evidence="8">
    <location>
        <begin position="587"/>
        <end position="592"/>
    </location>
</feature>
<feature type="strand" evidence="8">
    <location>
        <begin position="594"/>
        <end position="610"/>
    </location>
</feature>
<feature type="turn" evidence="8">
    <location>
        <begin position="611"/>
        <end position="613"/>
    </location>
</feature>
<feature type="helix" evidence="8">
    <location>
        <begin position="616"/>
        <end position="631"/>
    </location>
</feature>
<feature type="helix" evidence="8">
    <location>
        <begin position="633"/>
        <end position="637"/>
    </location>
</feature>